<accession>P39660</accession>
<accession>Q31N51</accession>
<accession>Q55109</accession>
<evidence type="ECO:0000255" key="1">
    <source>
        <dbReference type="PROSITE-ProRule" id="PRU00648"/>
    </source>
</evidence>
<evidence type="ECO:0000269" key="2">
    <source>
    </source>
</evidence>
<evidence type="ECO:0000269" key="3">
    <source>
    </source>
</evidence>
<evidence type="ECO:0000269" key="4">
    <source>
    </source>
</evidence>
<evidence type="ECO:0000305" key="5"/>
<evidence type="ECO:0000305" key="6">
    <source>
    </source>
</evidence>
<sequence length="450" mass="49108">MNEFQPVNRRQFLFTLGATAASAILLKGCGNPPSSSGGGTSSTTQPTAAGASDLEVKTIKLGYIPIFEAAPLIIGREKGFFAKYGLDVEVSKQASWAAARDNVILGSAGGGIDGGQWQMPMPALLTEGAISNGQKVPMYVLACLSTQGNGIAVSNQLKAQNLGLKLAPNRDFILNYPQTSGRKFKASYTFPNANQDFWIRYWFAAGGIDPDKDIELLTVPSAETLQNMRNGTIDCFSTGDPWPSRIAKDDIGYQAALTGQMWPYHPEEFLALRADWVDKHPKATLALLMGLMEAQQWCDQKANRAEMAKILSGRNFFNVPVSILQPILEGQIKVGADGKDLNNFDAGPLFWKSPRGSVSYPYKGLTLWFLVESIRWGFNKQVLPDIAAAQKLNDRVTREDLWQEAAKKLGVPAADIPTGSTRGTETFFDGITYNPDSPQAYLQSLKIKRA</sequence>
<feature type="signal peptide" description="Tat-type signal" evidence="1">
    <location>
        <begin position="1"/>
        <end position="36"/>
    </location>
</feature>
<feature type="chain" id="PRO_0000020847" description="Bicarbonate-binding protein CmpA">
    <location>
        <begin position="37"/>
        <end position="450"/>
    </location>
</feature>
<feature type="sequence conflict" description="In Ref. 1; AAA27303." evidence="5" ref="1">
    <original>M</original>
    <variation>I</variation>
    <location>
        <position position="119"/>
    </location>
</feature>
<comment type="function">
    <text evidence="2">Part of the ABC transporter complex CmpABCD involved in bicarbonate transport. Binds bicarbonate with high affinity.</text>
</comment>
<comment type="subunit">
    <text evidence="5">The complex is composed of two ATP-binding proteins (CmpC and CmpD), a transmembrane protein (CmpB) and a solute-binding protein (CmpA).</text>
</comment>
<comment type="subcellular location">
    <subcellularLocation>
        <location evidence="4">Cell inner membrane</location>
        <topology evidence="4">Peripheral membrane protein</topology>
    </subcellularLocation>
</comment>
<comment type="induction">
    <text evidence="2 3 4">By carbon dioxide-limited conditions, probably via CmpR. Also induced by growth under high light intensities. Repressed by iron-deficient conditions.</text>
</comment>
<comment type="PTM">
    <text>Predicted to be exported by the Tat system. The position of the signal peptide cleavage has not been experimentally proven.</text>
</comment>
<comment type="PTM">
    <text evidence="5">The N-terminus is blocked.</text>
</comment>
<comment type="similarity">
    <text evidence="5">Belongs to the CmpA/NrtA family.</text>
</comment>
<comment type="caution">
    <text evidence="6">Was originally thought to be a carotenoid-binding protein.</text>
</comment>
<reference key="1">
    <citation type="journal article" date="1989" name="J. Bacteriol.">
        <title>DNA sequence and regulation of the gene (cbpA) encoding the 42-kilodalton cytoplasmic membrane carotenoprotein of the cyanobacterium Synechococcus sp. strain PCC 7942.</title>
        <authorList>
            <person name="Reddy K.J."/>
            <person name="Masamoto K."/>
            <person name="Sherman D.M."/>
            <person name="Sherman L.A."/>
        </authorList>
    </citation>
    <scope>NUCLEOTIDE SEQUENCE [GENOMIC DNA]</scope>
    <scope>SUBCELLULAR LOCATION</scope>
    <scope>INDUCTION</scope>
</reference>
<reference key="2">
    <citation type="journal article" date="1990" name="Plant Physiol.">
        <title>Sequencing and modification of the gene encoding the 42-kilodalton protein in the cytoplasmic membrane of Synechococcus PCC 7942.</title>
        <authorList>
            <person name="Omata T."/>
            <person name="Carlson T.J."/>
            <person name="Ogawa T."/>
            <person name="Pierce J."/>
        </authorList>
    </citation>
    <scope>NUCLEOTIDE SEQUENCE [GENOMIC DNA]</scope>
    <scope>PROTEIN SEQUENCE OF 438-443</scope>
    <scope>INDUCTION</scope>
</reference>
<reference key="3">
    <citation type="submission" date="2005-08" db="EMBL/GenBank/DDBJ databases">
        <title>Complete sequence of chromosome 1 of Synechococcus elongatus PCC 7942.</title>
        <authorList>
            <consortium name="US DOE Joint Genome Institute"/>
            <person name="Copeland A."/>
            <person name="Lucas S."/>
            <person name="Lapidus A."/>
            <person name="Barry K."/>
            <person name="Detter J.C."/>
            <person name="Glavina T."/>
            <person name="Hammon N."/>
            <person name="Israni S."/>
            <person name="Pitluck S."/>
            <person name="Schmutz J."/>
            <person name="Larimer F."/>
            <person name="Land M."/>
            <person name="Kyrpides N."/>
            <person name="Lykidis A."/>
            <person name="Golden S."/>
            <person name="Richardson P."/>
        </authorList>
    </citation>
    <scope>NUCLEOTIDE SEQUENCE [LARGE SCALE GENOMIC DNA]</scope>
    <source>
        <strain>ATCC 33912 / PCC 7942 / FACHB-805</strain>
    </source>
</reference>
<reference key="4">
    <citation type="journal article" date="1999" name="Proc. Natl. Acad. Sci. U.S.A.">
        <title>Identification of an ATP-binding cassette transporter involved in bicarbonate uptake in the cyanobacterium Synechococcus sp. strain PCC 7942.</title>
        <authorList>
            <person name="Omata T."/>
            <person name="Price G.D."/>
            <person name="Badger M.R."/>
            <person name="Okamura M."/>
            <person name="Gohta S."/>
            <person name="Ogawa T."/>
        </authorList>
    </citation>
    <scope>FUNCTION IN BICARBONATE TRANSPORT</scope>
    <scope>INDUCTION</scope>
</reference>
<reference key="5">
    <citation type="journal article" date="2000" name="J. Biol. Chem.">
        <title>Bicarbonate binding activity of the CmpA protein of the cyanobacterium Synechococcus sp. strain PCC 7942 involved in active transport of bicarbonate.</title>
        <authorList>
            <person name="Maeda S."/>
            <person name="Price G.D."/>
            <person name="Badger M.R."/>
            <person name="Enomoto C."/>
            <person name="Omata T."/>
        </authorList>
    </citation>
    <scope>BINDING TO BICARBONATE</scope>
</reference>
<reference key="6">
    <citation type="journal article" date="2001" name="J. Bacteriol.">
        <title>Involvement of a CbbR homolog in low CO2-induced activation of the bicarbonate transporter operon in cyanobacteria.</title>
        <authorList>
            <person name="Omata T."/>
            <person name="Gohta S."/>
            <person name="Takahashi Y."/>
            <person name="Harano Y."/>
            <person name="Maeda S."/>
        </authorList>
    </citation>
    <scope>REGULATION BY CMPR</scope>
</reference>
<protein>
    <recommendedName>
        <fullName>Bicarbonate-binding protein CmpA</fullName>
    </recommendedName>
</protein>
<gene>
    <name type="primary">cmpA</name>
    <name type="synonym">cbpA</name>
    <name type="ordered locus">Synpcc7942_1488</name>
</gene>
<organism>
    <name type="scientific">Synechococcus elongatus (strain ATCC 33912 / PCC 7942 / FACHB-805)</name>
    <name type="common">Anacystis nidulans R2</name>
    <dbReference type="NCBI Taxonomy" id="1140"/>
    <lineage>
        <taxon>Bacteria</taxon>
        <taxon>Bacillati</taxon>
        <taxon>Cyanobacteriota</taxon>
        <taxon>Cyanophyceae</taxon>
        <taxon>Synechococcales</taxon>
        <taxon>Synechococcaceae</taxon>
        <taxon>Synechococcus</taxon>
    </lineage>
</organism>
<dbReference type="EMBL" id="M27055">
    <property type="protein sequence ID" value="AAA27303.1"/>
    <property type="molecule type" value="Genomic_DNA"/>
</dbReference>
<dbReference type="EMBL" id="M32999">
    <property type="protein sequence ID" value="AAA03704.1"/>
    <property type="molecule type" value="Unassigned_DNA"/>
</dbReference>
<dbReference type="EMBL" id="CP000100">
    <property type="protein sequence ID" value="ABB57518.1"/>
    <property type="molecule type" value="Genomic_DNA"/>
</dbReference>
<dbReference type="RefSeq" id="WP_011378052.1">
    <property type="nucleotide sequence ID" value="NZ_JACJTX010000004.1"/>
</dbReference>
<dbReference type="SMR" id="P39660"/>
<dbReference type="STRING" id="1140.Synpcc7942_1488"/>
<dbReference type="TCDB" id="3.A.1.16.3">
    <property type="family name" value="the atp-binding cassette (abc) superfamily"/>
</dbReference>
<dbReference type="PaxDb" id="1140-Synpcc7942_1488"/>
<dbReference type="KEGG" id="syf:Synpcc7942_1488"/>
<dbReference type="eggNOG" id="COG0715">
    <property type="taxonomic scope" value="Bacteria"/>
</dbReference>
<dbReference type="HOGENOM" id="CLU_037398_3_0_3"/>
<dbReference type="OrthoDB" id="568193at2"/>
<dbReference type="BioCyc" id="SYNEL:SYNPCC7942_1488-MONOMER"/>
<dbReference type="Proteomes" id="UP000889800">
    <property type="component" value="Chromosome"/>
</dbReference>
<dbReference type="GO" id="GO:0005886">
    <property type="term" value="C:plasma membrane"/>
    <property type="evidence" value="ECO:0007669"/>
    <property type="project" value="UniProtKB-SubCell"/>
</dbReference>
<dbReference type="GO" id="GO:0015106">
    <property type="term" value="F:bicarbonate transmembrane transporter activity"/>
    <property type="evidence" value="ECO:0000314"/>
    <property type="project" value="CACAO"/>
</dbReference>
<dbReference type="GO" id="GO:0006811">
    <property type="term" value="P:monoatomic ion transport"/>
    <property type="evidence" value="ECO:0007669"/>
    <property type="project" value="UniProtKB-KW"/>
</dbReference>
<dbReference type="CDD" id="cd13553">
    <property type="entry name" value="PBP2_NrtA_CpmA_like"/>
    <property type="match status" value="1"/>
</dbReference>
<dbReference type="Gene3D" id="3.40.190.10">
    <property type="entry name" value="Periplasmic binding protein-like II"/>
    <property type="match status" value="2"/>
</dbReference>
<dbReference type="InterPro" id="IPR044527">
    <property type="entry name" value="NrtA/CpmA_ABC-bd_dom"/>
</dbReference>
<dbReference type="InterPro" id="IPR006311">
    <property type="entry name" value="TAT_signal"/>
</dbReference>
<dbReference type="PANTHER" id="PTHR30024">
    <property type="entry name" value="ALIPHATIC SULFONATES-BINDING PROTEIN-RELATED"/>
    <property type="match status" value="1"/>
</dbReference>
<dbReference type="PANTHER" id="PTHR30024:SF7">
    <property type="entry name" value="NITRATE_NITRITE BINDING PROTEIN NRTA"/>
    <property type="match status" value="1"/>
</dbReference>
<dbReference type="Pfam" id="PF13379">
    <property type="entry name" value="NMT1_2"/>
    <property type="match status" value="1"/>
</dbReference>
<dbReference type="SUPFAM" id="SSF53850">
    <property type="entry name" value="Periplasmic binding protein-like II"/>
    <property type="match status" value="1"/>
</dbReference>
<dbReference type="PROSITE" id="PS51318">
    <property type="entry name" value="TAT"/>
    <property type="match status" value="1"/>
</dbReference>
<proteinExistence type="evidence at protein level"/>
<keyword id="KW-0997">Cell inner membrane</keyword>
<keyword id="KW-1003">Cell membrane</keyword>
<keyword id="KW-0903">Direct protein sequencing</keyword>
<keyword id="KW-0406">Ion transport</keyword>
<keyword id="KW-0472">Membrane</keyword>
<keyword id="KW-1185">Reference proteome</keyword>
<keyword id="KW-0732">Signal</keyword>
<keyword id="KW-0813">Transport</keyword>
<name>CMPA_SYNE7</name>